<reference key="1">
    <citation type="journal article" date="2001" name="Lancet">
        <title>Whole genome sequencing of meticillin-resistant Staphylococcus aureus.</title>
        <authorList>
            <person name="Kuroda M."/>
            <person name="Ohta T."/>
            <person name="Uchiyama I."/>
            <person name="Baba T."/>
            <person name="Yuzawa H."/>
            <person name="Kobayashi I."/>
            <person name="Cui L."/>
            <person name="Oguchi A."/>
            <person name="Aoki K."/>
            <person name="Nagai Y."/>
            <person name="Lian J.-Q."/>
            <person name="Ito T."/>
            <person name="Kanamori M."/>
            <person name="Matsumaru H."/>
            <person name="Maruyama A."/>
            <person name="Murakami H."/>
            <person name="Hosoyama A."/>
            <person name="Mizutani-Ui Y."/>
            <person name="Takahashi N.K."/>
            <person name="Sawano T."/>
            <person name="Inoue R."/>
            <person name="Kaito C."/>
            <person name="Sekimizu K."/>
            <person name="Hirakawa H."/>
            <person name="Kuhara S."/>
            <person name="Goto S."/>
            <person name="Yabuzaki J."/>
            <person name="Kanehisa M."/>
            <person name="Yamashita A."/>
            <person name="Oshima K."/>
            <person name="Furuya K."/>
            <person name="Yoshino C."/>
            <person name="Shiba T."/>
            <person name="Hattori M."/>
            <person name="Ogasawara N."/>
            <person name="Hayashi H."/>
            <person name="Hiramatsu K."/>
        </authorList>
    </citation>
    <scope>NUCLEOTIDE SEQUENCE [LARGE SCALE GENOMIC DNA]</scope>
    <source>
        <strain>Mu50 / ATCC 700699</strain>
    </source>
</reference>
<dbReference type="EMBL" id="BA000017">
    <property type="protein sequence ID" value="BAB57841.1"/>
    <property type="molecule type" value="Genomic_DNA"/>
</dbReference>
<dbReference type="RefSeq" id="WP_001125540.1">
    <property type="nucleotide sequence ID" value="NC_002758.2"/>
</dbReference>
<dbReference type="SMR" id="P66275"/>
<dbReference type="GeneID" id="98346041"/>
<dbReference type="KEGG" id="sav:SAV1679"/>
<dbReference type="HOGENOM" id="CLU_169643_3_0_9"/>
<dbReference type="PhylomeDB" id="P66275"/>
<dbReference type="Proteomes" id="UP000002481">
    <property type="component" value="Chromosome"/>
</dbReference>
<dbReference type="GO" id="GO:0022625">
    <property type="term" value="C:cytosolic large ribosomal subunit"/>
    <property type="evidence" value="ECO:0007669"/>
    <property type="project" value="TreeGrafter"/>
</dbReference>
<dbReference type="GO" id="GO:0003735">
    <property type="term" value="F:structural constituent of ribosome"/>
    <property type="evidence" value="ECO:0007669"/>
    <property type="project" value="InterPro"/>
</dbReference>
<dbReference type="GO" id="GO:0006412">
    <property type="term" value="P:translation"/>
    <property type="evidence" value="ECO:0007669"/>
    <property type="project" value="UniProtKB-UniRule"/>
</dbReference>
<dbReference type="FunFam" id="4.10.410.60:FF:000001">
    <property type="entry name" value="50S ribosomal protein L35"/>
    <property type="match status" value="1"/>
</dbReference>
<dbReference type="Gene3D" id="4.10.410.60">
    <property type="match status" value="1"/>
</dbReference>
<dbReference type="HAMAP" id="MF_00514">
    <property type="entry name" value="Ribosomal_bL35"/>
    <property type="match status" value="1"/>
</dbReference>
<dbReference type="InterPro" id="IPR001706">
    <property type="entry name" value="Ribosomal_bL35"/>
</dbReference>
<dbReference type="InterPro" id="IPR021137">
    <property type="entry name" value="Ribosomal_bL35-like"/>
</dbReference>
<dbReference type="InterPro" id="IPR018265">
    <property type="entry name" value="Ribosomal_bL35_CS"/>
</dbReference>
<dbReference type="InterPro" id="IPR037229">
    <property type="entry name" value="Ribosomal_bL35_sf"/>
</dbReference>
<dbReference type="NCBIfam" id="TIGR00001">
    <property type="entry name" value="rpmI_bact"/>
    <property type="match status" value="1"/>
</dbReference>
<dbReference type="PANTHER" id="PTHR33343">
    <property type="entry name" value="54S RIBOSOMAL PROTEIN BL35M"/>
    <property type="match status" value="1"/>
</dbReference>
<dbReference type="PANTHER" id="PTHR33343:SF1">
    <property type="entry name" value="LARGE RIBOSOMAL SUBUNIT PROTEIN BL35M"/>
    <property type="match status" value="1"/>
</dbReference>
<dbReference type="Pfam" id="PF01632">
    <property type="entry name" value="Ribosomal_L35p"/>
    <property type="match status" value="1"/>
</dbReference>
<dbReference type="PRINTS" id="PR00064">
    <property type="entry name" value="RIBOSOMALL35"/>
</dbReference>
<dbReference type="SUPFAM" id="SSF143034">
    <property type="entry name" value="L35p-like"/>
    <property type="match status" value="1"/>
</dbReference>
<dbReference type="PROSITE" id="PS00936">
    <property type="entry name" value="RIBOSOMAL_L35"/>
    <property type="match status" value="1"/>
</dbReference>
<protein>
    <recommendedName>
        <fullName evidence="1">Large ribosomal subunit protein bL35</fullName>
    </recommendedName>
    <alternativeName>
        <fullName evidence="3">50S ribosomal protein L35</fullName>
    </alternativeName>
</protein>
<organism>
    <name type="scientific">Staphylococcus aureus (strain Mu50 / ATCC 700699)</name>
    <dbReference type="NCBI Taxonomy" id="158878"/>
    <lineage>
        <taxon>Bacteria</taxon>
        <taxon>Bacillati</taxon>
        <taxon>Bacillota</taxon>
        <taxon>Bacilli</taxon>
        <taxon>Bacillales</taxon>
        <taxon>Staphylococcaceae</taxon>
        <taxon>Staphylococcus</taxon>
    </lineage>
</organism>
<evidence type="ECO:0000255" key="1">
    <source>
        <dbReference type="HAMAP-Rule" id="MF_00514"/>
    </source>
</evidence>
<evidence type="ECO:0000256" key="2">
    <source>
        <dbReference type="SAM" id="MobiDB-lite"/>
    </source>
</evidence>
<evidence type="ECO:0000305" key="3"/>
<proteinExistence type="inferred from homology"/>
<feature type="chain" id="PRO_0000177418" description="Large ribosomal subunit protein bL35">
    <location>
        <begin position="1"/>
        <end position="66"/>
    </location>
</feature>
<feature type="region of interest" description="Disordered" evidence="2">
    <location>
        <begin position="1"/>
        <end position="49"/>
    </location>
</feature>
<feature type="compositionally biased region" description="Basic residues" evidence="2">
    <location>
        <begin position="1"/>
        <end position="16"/>
    </location>
</feature>
<feature type="compositionally biased region" description="Basic residues" evidence="2">
    <location>
        <begin position="38"/>
        <end position="49"/>
    </location>
</feature>
<keyword id="KW-0687">Ribonucleoprotein</keyword>
<keyword id="KW-0689">Ribosomal protein</keyword>
<comment type="similarity">
    <text evidence="1">Belongs to the bacterial ribosomal protein bL35 family.</text>
</comment>
<name>RL35_STAAM</name>
<sequence length="66" mass="7697">MPKMKTHRGAAKRVKRTASGQLKRSRAFTSHLFANKSTKQKRQLRKARLVSKSDMKRVKQLLAYKK</sequence>
<accession>P66275</accession>
<accession>Q99TI2</accession>
<gene>
    <name evidence="1" type="primary">rpmI</name>
    <name type="ordered locus">SAV1679</name>
</gene>